<protein>
    <recommendedName>
        <fullName evidence="1">Hydroxyacylglutathione hydrolase</fullName>
        <ecNumber evidence="1">3.1.2.6</ecNumber>
    </recommendedName>
    <alternativeName>
        <fullName evidence="1">Glyoxalase II</fullName>
        <shortName evidence="1">Glx II</shortName>
    </alternativeName>
</protein>
<keyword id="KW-0378">Hydrolase</keyword>
<keyword id="KW-0479">Metal-binding</keyword>
<keyword id="KW-0862">Zinc</keyword>
<name>GLO2_CERS5</name>
<accession>A4WUN2</accession>
<feature type="chain" id="PRO_0000309690" description="Hydroxyacylglutathione hydrolase">
    <location>
        <begin position="1"/>
        <end position="255"/>
    </location>
</feature>
<feature type="binding site" evidence="1">
    <location>
        <position position="56"/>
    </location>
    <ligand>
        <name>Zn(2+)</name>
        <dbReference type="ChEBI" id="CHEBI:29105"/>
        <label>1</label>
    </ligand>
</feature>
<feature type="binding site" evidence="1">
    <location>
        <position position="58"/>
    </location>
    <ligand>
        <name>Zn(2+)</name>
        <dbReference type="ChEBI" id="CHEBI:29105"/>
        <label>1</label>
    </ligand>
</feature>
<feature type="binding site" evidence="1">
    <location>
        <position position="60"/>
    </location>
    <ligand>
        <name>Zn(2+)</name>
        <dbReference type="ChEBI" id="CHEBI:29105"/>
        <label>2</label>
    </ligand>
</feature>
<feature type="binding site" evidence="1">
    <location>
        <position position="61"/>
    </location>
    <ligand>
        <name>Zn(2+)</name>
        <dbReference type="ChEBI" id="CHEBI:29105"/>
        <label>2</label>
    </ligand>
</feature>
<feature type="binding site" evidence="1">
    <location>
        <position position="114"/>
    </location>
    <ligand>
        <name>Zn(2+)</name>
        <dbReference type="ChEBI" id="CHEBI:29105"/>
        <label>1</label>
    </ligand>
</feature>
<feature type="binding site" evidence="1">
    <location>
        <position position="133"/>
    </location>
    <ligand>
        <name>Zn(2+)</name>
        <dbReference type="ChEBI" id="CHEBI:29105"/>
        <label>1</label>
    </ligand>
</feature>
<feature type="binding site" evidence="1">
    <location>
        <position position="133"/>
    </location>
    <ligand>
        <name>Zn(2+)</name>
        <dbReference type="ChEBI" id="CHEBI:29105"/>
        <label>2</label>
    </ligand>
</feature>
<feature type="binding site" evidence="1">
    <location>
        <position position="171"/>
    </location>
    <ligand>
        <name>Zn(2+)</name>
        <dbReference type="ChEBI" id="CHEBI:29105"/>
        <label>2</label>
    </ligand>
</feature>
<reference key="1">
    <citation type="submission" date="2007-04" db="EMBL/GenBank/DDBJ databases">
        <title>Complete sequence of chromosome of Rhodobacter sphaeroides ATCC 17025.</title>
        <authorList>
            <consortium name="US DOE Joint Genome Institute"/>
            <person name="Copeland A."/>
            <person name="Lucas S."/>
            <person name="Lapidus A."/>
            <person name="Barry K."/>
            <person name="Detter J.C."/>
            <person name="Glavina del Rio T."/>
            <person name="Hammon N."/>
            <person name="Israni S."/>
            <person name="Dalin E."/>
            <person name="Tice H."/>
            <person name="Pitluck S."/>
            <person name="Chertkov O."/>
            <person name="Brettin T."/>
            <person name="Bruce D."/>
            <person name="Han C."/>
            <person name="Schmutz J."/>
            <person name="Larimer F."/>
            <person name="Land M."/>
            <person name="Hauser L."/>
            <person name="Kyrpides N."/>
            <person name="Kim E."/>
            <person name="Richardson P."/>
            <person name="Mackenzie C."/>
            <person name="Choudhary M."/>
            <person name="Donohue T.J."/>
            <person name="Kaplan S."/>
        </authorList>
    </citation>
    <scope>NUCLEOTIDE SEQUENCE [LARGE SCALE GENOMIC DNA]</scope>
    <source>
        <strain>ATCC 17025 / ATH 2.4.3</strain>
    </source>
</reference>
<comment type="function">
    <text evidence="1">Thiolesterase that catalyzes the hydrolysis of S-D-lactoyl-glutathione to form glutathione and D-lactic acid.</text>
</comment>
<comment type="catalytic activity">
    <reaction evidence="1">
        <text>an S-(2-hydroxyacyl)glutathione + H2O = a 2-hydroxy carboxylate + glutathione + H(+)</text>
        <dbReference type="Rhea" id="RHEA:21864"/>
        <dbReference type="ChEBI" id="CHEBI:15377"/>
        <dbReference type="ChEBI" id="CHEBI:15378"/>
        <dbReference type="ChEBI" id="CHEBI:57925"/>
        <dbReference type="ChEBI" id="CHEBI:58896"/>
        <dbReference type="ChEBI" id="CHEBI:71261"/>
        <dbReference type="EC" id="3.1.2.6"/>
    </reaction>
</comment>
<comment type="cofactor">
    <cofactor evidence="1">
        <name>Zn(2+)</name>
        <dbReference type="ChEBI" id="CHEBI:29105"/>
    </cofactor>
    <text evidence="1">Binds 2 Zn(2+) ions per subunit.</text>
</comment>
<comment type="pathway">
    <text evidence="1">Secondary metabolite metabolism; methylglyoxal degradation; (R)-lactate from methylglyoxal: step 2/2.</text>
</comment>
<comment type="subunit">
    <text evidence="1">Monomer.</text>
</comment>
<comment type="similarity">
    <text evidence="1">Belongs to the metallo-beta-lactamase superfamily. Glyoxalase II family.</text>
</comment>
<organism>
    <name type="scientific">Cereibacter sphaeroides (strain ATCC 17025 / ATH 2.4.3)</name>
    <name type="common">Rhodobacter sphaeroides</name>
    <dbReference type="NCBI Taxonomy" id="349102"/>
    <lineage>
        <taxon>Bacteria</taxon>
        <taxon>Pseudomonadati</taxon>
        <taxon>Pseudomonadota</taxon>
        <taxon>Alphaproteobacteria</taxon>
        <taxon>Rhodobacterales</taxon>
        <taxon>Paracoccaceae</taxon>
        <taxon>Cereibacter</taxon>
    </lineage>
</organism>
<sequence length="255" mass="27110">MPLELVTVPCLSDNYAFLVHDAASGETAVVDVPEAGPVMAALAERNWRLTQILLTHHHGDHVAGVAALREATGARVAGAAADAHRLPPLDLALAEGDRVRIGSEDGTVLEVPGHTVGHIAFHFADSGLAFTGDSLMAMGCGRLFEGTPRMMWQSLRKLSALPADTLICSGHEYTQANARFACTLEPENPVLIFRVGSIAAARKEGRPTVPSQLSDEIATNPFLRAGEAALKAAVGMADAEDAEVFAEIRRRKDNF</sequence>
<gene>
    <name evidence="1" type="primary">gloB</name>
    <name type="ordered locus">Rsph17025_2206</name>
</gene>
<evidence type="ECO:0000255" key="1">
    <source>
        <dbReference type="HAMAP-Rule" id="MF_01374"/>
    </source>
</evidence>
<dbReference type="EC" id="3.1.2.6" evidence="1"/>
<dbReference type="EMBL" id="CP000661">
    <property type="protein sequence ID" value="ABP71096.1"/>
    <property type="molecule type" value="Genomic_DNA"/>
</dbReference>
<dbReference type="SMR" id="A4WUN2"/>
<dbReference type="STRING" id="349102.Rsph17025_2206"/>
<dbReference type="KEGG" id="rsq:Rsph17025_2206"/>
<dbReference type="eggNOG" id="COG0491">
    <property type="taxonomic scope" value="Bacteria"/>
</dbReference>
<dbReference type="HOGENOM" id="CLU_030571_4_1_5"/>
<dbReference type="BioCyc" id="RSPH349102:G1G8M-2274-MONOMER"/>
<dbReference type="UniPathway" id="UPA00619">
    <property type="reaction ID" value="UER00676"/>
</dbReference>
<dbReference type="GO" id="GO:0004416">
    <property type="term" value="F:hydroxyacylglutathione hydrolase activity"/>
    <property type="evidence" value="ECO:0007669"/>
    <property type="project" value="UniProtKB-UniRule"/>
</dbReference>
<dbReference type="GO" id="GO:0046872">
    <property type="term" value="F:metal ion binding"/>
    <property type="evidence" value="ECO:0007669"/>
    <property type="project" value="UniProtKB-KW"/>
</dbReference>
<dbReference type="GO" id="GO:0019243">
    <property type="term" value="P:methylglyoxal catabolic process to D-lactate via S-lactoyl-glutathione"/>
    <property type="evidence" value="ECO:0007669"/>
    <property type="project" value="InterPro"/>
</dbReference>
<dbReference type="CDD" id="cd07723">
    <property type="entry name" value="hydroxyacylglutathione_hydrolase_MBL-fold"/>
    <property type="match status" value="1"/>
</dbReference>
<dbReference type="Gene3D" id="3.60.15.10">
    <property type="entry name" value="Ribonuclease Z/Hydroxyacylglutathione hydrolase-like"/>
    <property type="match status" value="1"/>
</dbReference>
<dbReference type="HAMAP" id="MF_01374">
    <property type="entry name" value="Glyoxalase_2"/>
    <property type="match status" value="1"/>
</dbReference>
<dbReference type="InterPro" id="IPR035680">
    <property type="entry name" value="Clx_II_MBL"/>
</dbReference>
<dbReference type="InterPro" id="IPR050110">
    <property type="entry name" value="Glyoxalase_II_hydrolase"/>
</dbReference>
<dbReference type="InterPro" id="IPR032282">
    <property type="entry name" value="HAGH_C"/>
</dbReference>
<dbReference type="InterPro" id="IPR017782">
    <property type="entry name" value="Hydroxyacylglutathione_Hdrlase"/>
</dbReference>
<dbReference type="InterPro" id="IPR001279">
    <property type="entry name" value="Metallo-B-lactamas"/>
</dbReference>
<dbReference type="InterPro" id="IPR036866">
    <property type="entry name" value="RibonucZ/Hydroxyglut_hydro"/>
</dbReference>
<dbReference type="NCBIfam" id="TIGR03413">
    <property type="entry name" value="GSH_gloB"/>
    <property type="match status" value="1"/>
</dbReference>
<dbReference type="PANTHER" id="PTHR43705">
    <property type="entry name" value="HYDROXYACYLGLUTATHIONE HYDROLASE"/>
    <property type="match status" value="1"/>
</dbReference>
<dbReference type="PANTHER" id="PTHR43705:SF1">
    <property type="entry name" value="HYDROXYACYLGLUTATHIONE HYDROLASE GLOB"/>
    <property type="match status" value="1"/>
</dbReference>
<dbReference type="Pfam" id="PF16123">
    <property type="entry name" value="HAGH_C"/>
    <property type="match status" value="1"/>
</dbReference>
<dbReference type="Pfam" id="PF00753">
    <property type="entry name" value="Lactamase_B"/>
    <property type="match status" value="1"/>
</dbReference>
<dbReference type="PIRSF" id="PIRSF005457">
    <property type="entry name" value="Glx"/>
    <property type="match status" value="1"/>
</dbReference>
<dbReference type="SMART" id="SM00849">
    <property type="entry name" value="Lactamase_B"/>
    <property type="match status" value="1"/>
</dbReference>
<dbReference type="SUPFAM" id="SSF56281">
    <property type="entry name" value="Metallo-hydrolase/oxidoreductase"/>
    <property type="match status" value="1"/>
</dbReference>
<proteinExistence type="inferred from homology"/>